<dbReference type="EC" id="2.4.1.18"/>
<dbReference type="EMBL" id="AF434710">
    <property type="protein sequence ID" value="AAN64024.1"/>
    <property type="molecule type" value="Genomic_DNA"/>
</dbReference>
<dbReference type="SMR" id="Q8GQC5"/>
<dbReference type="CAZy" id="CBM48">
    <property type="family name" value="Carbohydrate-Binding Module Family 48"/>
</dbReference>
<dbReference type="CAZy" id="GH13">
    <property type="family name" value="Glycoside Hydrolase Family 13"/>
</dbReference>
<dbReference type="UniPathway" id="UPA00164"/>
<dbReference type="GO" id="GO:0005829">
    <property type="term" value="C:cytosol"/>
    <property type="evidence" value="ECO:0007669"/>
    <property type="project" value="TreeGrafter"/>
</dbReference>
<dbReference type="GO" id="GO:0003844">
    <property type="term" value="F:1,4-alpha-glucan branching enzyme activity"/>
    <property type="evidence" value="ECO:0007669"/>
    <property type="project" value="UniProtKB-UniRule"/>
</dbReference>
<dbReference type="GO" id="GO:0043169">
    <property type="term" value="F:cation binding"/>
    <property type="evidence" value="ECO:0007669"/>
    <property type="project" value="InterPro"/>
</dbReference>
<dbReference type="GO" id="GO:0004553">
    <property type="term" value="F:hydrolase activity, hydrolyzing O-glycosyl compounds"/>
    <property type="evidence" value="ECO:0007669"/>
    <property type="project" value="InterPro"/>
</dbReference>
<dbReference type="GO" id="GO:0005978">
    <property type="term" value="P:glycogen biosynthetic process"/>
    <property type="evidence" value="ECO:0007669"/>
    <property type="project" value="UniProtKB-UniRule"/>
</dbReference>
<dbReference type="CDD" id="cd11322">
    <property type="entry name" value="AmyAc_Glg_BE"/>
    <property type="match status" value="1"/>
</dbReference>
<dbReference type="CDD" id="cd02855">
    <property type="entry name" value="E_set_GBE_prok_N"/>
    <property type="match status" value="1"/>
</dbReference>
<dbReference type="FunFam" id="2.60.40.10:FF:000169">
    <property type="entry name" value="1,4-alpha-glucan branching enzyme GlgB"/>
    <property type="match status" value="1"/>
</dbReference>
<dbReference type="FunFam" id="2.60.40.1180:FF:000002">
    <property type="entry name" value="1,4-alpha-glucan branching enzyme GlgB"/>
    <property type="match status" value="1"/>
</dbReference>
<dbReference type="FunFam" id="3.20.20.80:FF:000003">
    <property type="entry name" value="1,4-alpha-glucan branching enzyme GlgB"/>
    <property type="match status" value="1"/>
</dbReference>
<dbReference type="Gene3D" id="3.20.20.80">
    <property type="entry name" value="Glycosidases"/>
    <property type="match status" value="1"/>
</dbReference>
<dbReference type="Gene3D" id="2.60.40.1180">
    <property type="entry name" value="Golgi alpha-mannosidase II"/>
    <property type="match status" value="1"/>
</dbReference>
<dbReference type="Gene3D" id="2.60.40.10">
    <property type="entry name" value="Immunoglobulins"/>
    <property type="match status" value="1"/>
</dbReference>
<dbReference type="HAMAP" id="MF_00685">
    <property type="entry name" value="GlgB"/>
    <property type="match status" value="1"/>
</dbReference>
<dbReference type="InterPro" id="IPR006048">
    <property type="entry name" value="A-amylase/branching_C"/>
</dbReference>
<dbReference type="InterPro" id="IPR037439">
    <property type="entry name" value="Branching_enzy"/>
</dbReference>
<dbReference type="InterPro" id="IPR006407">
    <property type="entry name" value="GlgB"/>
</dbReference>
<dbReference type="InterPro" id="IPR054169">
    <property type="entry name" value="GlgB_N"/>
</dbReference>
<dbReference type="InterPro" id="IPR044143">
    <property type="entry name" value="GlgB_N_E_set_prok"/>
</dbReference>
<dbReference type="InterPro" id="IPR006047">
    <property type="entry name" value="Glyco_hydro_13_cat_dom"/>
</dbReference>
<dbReference type="InterPro" id="IPR004193">
    <property type="entry name" value="Glyco_hydro_13_N"/>
</dbReference>
<dbReference type="InterPro" id="IPR013780">
    <property type="entry name" value="Glyco_hydro_b"/>
</dbReference>
<dbReference type="InterPro" id="IPR017853">
    <property type="entry name" value="Glycoside_hydrolase_SF"/>
</dbReference>
<dbReference type="InterPro" id="IPR013783">
    <property type="entry name" value="Ig-like_fold"/>
</dbReference>
<dbReference type="InterPro" id="IPR014756">
    <property type="entry name" value="Ig_E-set"/>
</dbReference>
<dbReference type="NCBIfam" id="TIGR01515">
    <property type="entry name" value="branching_enzym"/>
    <property type="match status" value="1"/>
</dbReference>
<dbReference type="NCBIfam" id="NF003811">
    <property type="entry name" value="PRK05402.1"/>
    <property type="match status" value="1"/>
</dbReference>
<dbReference type="NCBIfam" id="NF008967">
    <property type="entry name" value="PRK12313.1"/>
    <property type="match status" value="1"/>
</dbReference>
<dbReference type="PANTHER" id="PTHR43651">
    <property type="entry name" value="1,4-ALPHA-GLUCAN-BRANCHING ENZYME"/>
    <property type="match status" value="1"/>
</dbReference>
<dbReference type="PANTHER" id="PTHR43651:SF3">
    <property type="entry name" value="1,4-ALPHA-GLUCAN-BRANCHING ENZYME"/>
    <property type="match status" value="1"/>
</dbReference>
<dbReference type="Pfam" id="PF00128">
    <property type="entry name" value="Alpha-amylase"/>
    <property type="match status" value="1"/>
</dbReference>
<dbReference type="Pfam" id="PF02806">
    <property type="entry name" value="Alpha-amylase_C"/>
    <property type="match status" value="1"/>
</dbReference>
<dbReference type="Pfam" id="PF02922">
    <property type="entry name" value="CBM_48"/>
    <property type="match status" value="1"/>
</dbReference>
<dbReference type="Pfam" id="PF22019">
    <property type="entry name" value="GlgB_N"/>
    <property type="match status" value="1"/>
</dbReference>
<dbReference type="PIRSF" id="PIRSF000463">
    <property type="entry name" value="GlgB"/>
    <property type="match status" value="1"/>
</dbReference>
<dbReference type="SMART" id="SM00642">
    <property type="entry name" value="Aamy"/>
    <property type="match status" value="1"/>
</dbReference>
<dbReference type="SUPFAM" id="SSF51445">
    <property type="entry name" value="(Trans)glycosidases"/>
    <property type="match status" value="1"/>
</dbReference>
<dbReference type="SUPFAM" id="SSF81296">
    <property type="entry name" value="E set domains"/>
    <property type="match status" value="2"/>
</dbReference>
<dbReference type="SUPFAM" id="SSF51011">
    <property type="entry name" value="Glycosyl hydrolase domain"/>
    <property type="match status" value="1"/>
</dbReference>
<accession>Q8GQC5</accession>
<keyword id="KW-0119">Carbohydrate metabolism</keyword>
<keyword id="KW-0903">Direct protein sequencing</keyword>
<keyword id="KW-0320">Glycogen biosynthesis</keyword>
<keyword id="KW-0321">Glycogen metabolism</keyword>
<keyword id="KW-0328">Glycosyltransferase</keyword>
<keyword id="KW-0808">Transferase</keyword>
<reference key="1">
    <citation type="journal article" date="2003" name="Biochem. Biophys. Res. Commun.">
        <title>Cloning and characterization of the glycogen branching enzyme gene existing in tandem with the glycogen debranching enzyme from Pectobacterium chrysanthemi PY35.</title>
        <authorList>
            <person name="Lim W.-J."/>
            <person name="Park S.-R."/>
            <person name="Kim M.-K."/>
            <person name="An C.-L."/>
            <person name="Yun H.-J."/>
            <person name="Hong S.-Y."/>
            <person name="Kim E.-J."/>
            <person name="Shin E.-C."/>
            <person name="Lee S.-W."/>
            <person name="Lim Y.-P."/>
            <person name="Yun H.-D."/>
        </authorList>
    </citation>
    <scope>NUCLEOTIDE SEQUENCE [GENOMIC DNA]</scope>
    <scope>PROTEIN SEQUENCE OF 1-6</scope>
    <scope>CHARACTERIZATION</scope>
    <source>
        <strain>PY35</strain>
    </source>
</reference>
<gene>
    <name type="primary">glgB</name>
</gene>
<name>GLGB_DICCH</name>
<protein>
    <recommendedName>
        <fullName>1,4-alpha-glucan branching enzyme GlgB</fullName>
        <ecNumber>2.4.1.18</ecNumber>
    </recommendedName>
    <alternativeName>
        <fullName>1,4-alpha-D-glucan:1,4-alpha-D-glucan 6-glucosyl-transferase</fullName>
    </alternativeName>
    <alternativeName>
        <fullName>Alpha-(1-&gt;4)-glucan branching enzyme</fullName>
    </alternativeName>
    <alternativeName>
        <fullName>Glycogen branching enzyme</fullName>
        <shortName>BE</shortName>
    </alternativeName>
</protein>
<proteinExistence type="evidence at protein level"/>
<feature type="chain" id="PRO_0000188705" description="1,4-alpha-glucan branching enzyme GlgB">
    <location>
        <begin position="1"/>
        <end position="731"/>
    </location>
</feature>
<feature type="active site" description="Nucleophile" evidence="1">
    <location>
        <position position="409"/>
    </location>
</feature>
<feature type="active site" description="Proton donor" evidence="1">
    <location>
        <position position="462"/>
    </location>
</feature>
<organism>
    <name type="scientific">Dickeya chrysanthemi</name>
    <name type="common">Pectobacterium chrysanthemi</name>
    <name type="synonym">Erwinia chrysanthemi</name>
    <dbReference type="NCBI Taxonomy" id="556"/>
    <lineage>
        <taxon>Bacteria</taxon>
        <taxon>Pseudomonadati</taxon>
        <taxon>Pseudomonadota</taxon>
        <taxon>Gammaproteobacteria</taxon>
        <taxon>Enterobacterales</taxon>
        <taxon>Pectobacteriaceae</taxon>
        <taxon>Dickeya</taxon>
    </lineage>
</organism>
<sequence length="731" mass="83859">MFVAAMTESDQNIINLLFSGHYADPFAVLGMHDTASGLEVRALLPDAIDVWVVDAHSGRKVANLQCRDPRGFFASAIPRRKKPFSYRLAVTWPQDTQVIDDPYRFGTLLQELDIWLLAEGRHLRPFETLGAHPSTLDGVVGTCFAVWAPNAQRVSVVGDFNFWDGRRHPMRRRRENGVWELFVPGVGPGQLYKFEIIDCYGNVLVKSDPYAFESQMRPDTASVVSRLPPALPVDEARQHANELQSPISIYEVHLGSWRRHTHNNFWLSYRELADQLVPYVKEMGFTHVELMPVHKHPFDGSWGYQPLGLYAPTRRFGSPDDFRYLVSAFHEAGINVLLDWVSGHFPADSYGLARFDGPALYEYADPKEGYHQDWNTLIYNFDRHEVRNYLAGNALYWTERFGVDGLRVDAVASMIYRDYSRRDGEWVPNYFGGKENLEAIGFLRYTNQMLGQHHAGAVTIAEESTDYAGVTLPPEHGGLGFHYKWNMGWMHDSLAYMQLDPVHRKYHHDLLTFGMLYAYSENFVLPLSHDEVVHGKRSLLDRMPGDVWQKFANLRAYYGFMWAYPGKKLLFMGGEFAQGREWNHDTSLDWHLLDEPEGWHAGVQQLVRDLNHCYRQHPPLYQCDYLHQGFEWVVVDDRENSVFAFIRRDADGNEMLIISNFTPVPRDSYRVGINQPGAWREVLNTDSWHYHGGNLGNQGLVYSETVGSHSRPQSLVLALPPLATLYLVKEA</sequence>
<evidence type="ECO:0000250" key="1"/>
<evidence type="ECO:0000305" key="2"/>
<comment type="function">
    <text>Catalyzes the formation of the alpha-1,6-glucosidic linkages in glycogen by scission of a 1,4-alpha-linked oligosaccharide from growing alpha-1,4-glucan chains and the subsequent attachment of the oligosaccharide to the alpha-1,6 position.</text>
</comment>
<comment type="catalytic activity">
    <reaction>
        <text>Transfers a segment of a (1-&gt;4)-alpha-D-glucan chain to a primary hydroxy group in a similar glucan chain.</text>
        <dbReference type="EC" id="2.4.1.18"/>
    </reaction>
</comment>
<comment type="biophysicochemical properties">
    <phDependence>
        <text>Optimum pH is 7.</text>
    </phDependence>
    <temperatureDependence>
        <text>Optimum temperature is 30 degrees Celsius.</text>
    </temperatureDependence>
</comment>
<comment type="pathway">
    <text>Glycan biosynthesis; glycogen biosynthesis.</text>
</comment>
<comment type="subunit">
    <text evidence="1">Monomer.</text>
</comment>
<comment type="similarity">
    <text evidence="2">Belongs to the glycosyl hydrolase 13 family. GlgB subfamily.</text>
</comment>